<evidence type="ECO:0000255" key="1">
    <source>
        <dbReference type="HAMAP-Rule" id="MF_00565"/>
    </source>
</evidence>
<keyword id="KW-0961">Cell wall biogenesis/degradation</keyword>
<keyword id="KW-0963">Cytoplasm</keyword>
<keyword id="KW-0596">Phosphopantetheine</keyword>
<keyword id="KW-0597">Phosphoprotein</keyword>
<proteinExistence type="inferred from homology"/>
<organism>
    <name type="scientific">Streptococcus pneumoniae (strain JJA)</name>
    <dbReference type="NCBI Taxonomy" id="488222"/>
    <lineage>
        <taxon>Bacteria</taxon>
        <taxon>Bacillati</taxon>
        <taxon>Bacillota</taxon>
        <taxon>Bacilli</taxon>
        <taxon>Lactobacillales</taxon>
        <taxon>Streptococcaceae</taxon>
        <taxon>Streptococcus</taxon>
    </lineage>
</organism>
<comment type="function">
    <text evidence="1">Carrier protein involved in the D-alanylation of lipoteichoic acid (LTA). The loading of thioester-linked D-alanine onto DltC is catalyzed by D-alanine--D-alanyl carrier protein ligase DltA. The DltC-carried D-alanyl group is further transferred to cell membrane phosphatidylglycerol (PG) by forming an ester bond, probably catalyzed by DltD. D-alanylation of LTA plays an important role in modulating the properties of the cell wall in Gram-positive bacteria, influencing the net charge of the cell wall.</text>
</comment>
<comment type="pathway">
    <text evidence="1">Cell wall biogenesis; lipoteichoic acid biosynthesis.</text>
</comment>
<comment type="subcellular location">
    <subcellularLocation>
        <location evidence="1">Cytoplasm</location>
    </subcellularLocation>
</comment>
<comment type="PTM">
    <text evidence="1">4'-phosphopantetheine is transferred from CoA to a specific serine of apo-DCP.</text>
</comment>
<comment type="similarity">
    <text evidence="1">Belongs to the DltC family.</text>
</comment>
<dbReference type="EMBL" id="CP000919">
    <property type="protein sequence ID" value="ACO18344.1"/>
    <property type="molecule type" value="Genomic_DNA"/>
</dbReference>
<dbReference type="RefSeq" id="WP_000351967.1">
    <property type="nucleotide sequence ID" value="NC_012466.1"/>
</dbReference>
<dbReference type="SMR" id="C1CHH5"/>
<dbReference type="GeneID" id="93738863"/>
<dbReference type="KEGG" id="sjj:SPJ_2202"/>
<dbReference type="HOGENOM" id="CLU_108696_19_0_9"/>
<dbReference type="UniPathway" id="UPA00556"/>
<dbReference type="Proteomes" id="UP000002206">
    <property type="component" value="Chromosome"/>
</dbReference>
<dbReference type="GO" id="GO:0005737">
    <property type="term" value="C:cytoplasm"/>
    <property type="evidence" value="ECO:0007669"/>
    <property type="project" value="UniProtKB-SubCell"/>
</dbReference>
<dbReference type="GO" id="GO:0036370">
    <property type="term" value="F:D-alanyl carrier activity"/>
    <property type="evidence" value="ECO:0007669"/>
    <property type="project" value="UniProtKB-UniRule"/>
</dbReference>
<dbReference type="GO" id="GO:0071555">
    <property type="term" value="P:cell wall organization"/>
    <property type="evidence" value="ECO:0007669"/>
    <property type="project" value="UniProtKB-KW"/>
</dbReference>
<dbReference type="GO" id="GO:0070395">
    <property type="term" value="P:lipoteichoic acid biosynthetic process"/>
    <property type="evidence" value="ECO:0007669"/>
    <property type="project" value="UniProtKB-UniRule"/>
</dbReference>
<dbReference type="Gene3D" id="1.10.1200.10">
    <property type="entry name" value="ACP-like"/>
    <property type="match status" value="1"/>
</dbReference>
<dbReference type="HAMAP" id="MF_00565">
    <property type="entry name" value="DltC"/>
    <property type="match status" value="1"/>
</dbReference>
<dbReference type="InterPro" id="IPR036736">
    <property type="entry name" value="ACP-like_sf"/>
</dbReference>
<dbReference type="InterPro" id="IPR003230">
    <property type="entry name" value="DltC"/>
</dbReference>
<dbReference type="InterPro" id="IPR009081">
    <property type="entry name" value="PP-bd_ACP"/>
</dbReference>
<dbReference type="NCBIfam" id="TIGR01688">
    <property type="entry name" value="dltC"/>
    <property type="match status" value="1"/>
</dbReference>
<dbReference type="NCBIfam" id="NF003464">
    <property type="entry name" value="PRK05087.1"/>
    <property type="match status" value="1"/>
</dbReference>
<dbReference type="Pfam" id="PF00550">
    <property type="entry name" value="PP-binding"/>
    <property type="match status" value="1"/>
</dbReference>
<dbReference type="SUPFAM" id="SSF47336">
    <property type="entry name" value="ACP-like"/>
    <property type="match status" value="1"/>
</dbReference>
<dbReference type="PROSITE" id="PS50075">
    <property type="entry name" value="CARRIER"/>
    <property type="match status" value="1"/>
</dbReference>
<sequence length="79" mass="8980">MDIKSEVIEIIDELFMEDVSDMMDEDLFDAGVLDSMGTVELIVEIENRFDIRVPVTEFGRDDWNTANKIIAGIVELQNA</sequence>
<protein>
    <recommendedName>
        <fullName evidence="1">D-alanyl carrier protein</fullName>
        <shortName evidence="1">DCP</shortName>
    </recommendedName>
    <alternativeName>
        <fullName evidence="1">D-alanine--poly(phosphoribitol) ligase subunit 2</fullName>
    </alternativeName>
</protein>
<name>DLTC_STRZJ</name>
<accession>C1CHH5</accession>
<reference key="1">
    <citation type="journal article" date="2010" name="Genome Biol.">
        <title>Structure and dynamics of the pan-genome of Streptococcus pneumoniae and closely related species.</title>
        <authorList>
            <person name="Donati C."/>
            <person name="Hiller N.L."/>
            <person name="Tettelin H."/>
            <person name="Muzzi A."/>
            <person name="Croucher N.J."/>
            <person name="Angiuoli S.V."/>
            <person name="Oggioni M."/>
            <person name="Dunning Hotopp J.C."/>
            <person name="Hu F.Z."/>
            <person name="Riley D.R."/>
            <person name="Covacci A."/>
            <person name="Mitchell T.J."/>
            <person name="Bentley S.D."/>
            <person name="Kilian M."/>
            <person name="Ehrlich G.D."/>
            <person name="Rappuoli R."/>
            <person name="Moxon E.R."/>
            <person name="Masignani V."/>
        </authorList>
    </citation>
    <scope>NUCLEOTIDE SEQUENCE [LARGE SCALE GENOMIC DNA]</scope>
    <source>
        <strain>JJA</strain>
    </source>
</reference>
<gene>
    <name evidence="1" type="primary">dltC</name>
    <name type="ordered locus">SPJ_2202</name>
</gene>
<feature type="chain" id="PRO_1000146800" description="D-alanyl carrier protein">
    <location>
        <begin position="1"/>
        <end position="79"/>
    </location>
</feature>
<feature type="domain" description="Carrier" evidence="1">
    <location>
        <begin position="1"/>
        <end position="77"/>
    </location>
</feature>
<feature type="modified residue" description="O-(pantetheine 4'-phosphoryl)serine" evidence="1">
    <location>
        <position position="35"/>
    </location>
</feature>